<proteinExistence type="inferred from homology"/>
<name>ARCA_STRA5</name>
<comment type="catalytic activity">
    <reaction evidence="1">
        <text>L-arginine + H2O = L-citrulline + NH4(+)</text>
        <dbReference type="Rhea" id="RHEA:19597"/>
        <dbReference type="ChEBI" id="CHEBI:15377"/>
        <dbReference type="ChEBI" id="CHEBI:28938"/>
        <dbReference type="ChEBI" id="CHEBI:32682"/>
        <dbReference type="ChEBI" id="CHEBI:57743"/>
        <dbReference type="EC" id="3.5.3.6"/>
    </reaction>
</comment>
<comment type="pathway">
    <text evidence="1">Amino-acid degradation; L-arginine degradation via ADI pathway; carbamoyl phosphate from L-arginine: step 1/2.</text>
</comment>
<comment type="subcellular location">
    <subcellularLocation>
        <location evidence="1">Cytoplasm</location>
    </subcellularLocation>
</comment>
<comment type="similarity">
    <text evidence="1">Belongs to the arginine deiminase family.</text>
</comment>
<accession>Q8DWQ2</accession>
<gene>
    <name evidence="1" type="primary">arcA</name>
    <name type="ordered locus">SAG2163</name>
</gene>
<reference key="1">
    <citation type="journal article" date="2002" name="Proc. Natl. Acad. Sci. U.S.A.">
        <title>Complete genome sequence and comparative genomic analysis of an emerging human pathogen, serotype V Streptococcus agalactiae.</title>
        <authorList>
            <person name="Tettelin H."/>
            <person name="Masignani V."/>
            <person name="Cieslewicz M.J."/>
            <person name="Eisen J.A."/>
            <person name="Peterson S.N."/>
            <person name="Wessels M.R."/>
            <person name="Paulsen I.T."/>
            <person name="Nelson K.E."/>
            <person name="Margarit I."/>
            <person name="Read T.D."/>
            <person name="Madoff L.C."/>
            <person name="Wolf A.M."/>
            <person name="Beanan M.J."/>
            <person name="Brinkac L.M."/>
            <person name="Daugherty S.C."/>
            <person name="DeBoy R.T."/>
            <person name="Durkin A.S."/>
            <person name="Kolonay J.F."/>
            <person name="Madupu R."/>
            <person name="Lewis M.R."/>
            <person name="Radune D."/>
            <person name="Fedorova N.B."/>
            <person name="Scanlan D."/>
            <person name="Khouri H.M."/>
            <person name="Mulligan S."/>
            <person name="Carty H.A."/>
            <person name="Cline R.T."/>
            <person name="Van Aken S.E."/>
            <person name="Gill J."/>
            <person name="Scarselli M."/>
            <person name="Mora M."/>
            <person name="Iacobini E.T."/>
            <person name="Brettoni C."/>
            <person name="Galli G."/>
            <person name="Mariani M."/>
            <person name="Vegni F."/>
            <person name="Maione D."/>
            <person name="Rinaudo D."/>
            <person name="Rappuoli R."/>
            <person name="Telford J.L."/>
            <person name="Kasper D.L."/>
            <person name="Grandi G."/>
            <person name="Fraser C.M."/>
        </authorList>
    </citation>
    <scope>NUCLEOTIDE SEQUENCE [LARGE SCALE GENOMIC DNA]</scope>
    <source>
        <strain>ATCC BAA-611 / 2603 V/R</strain>
    </source>
</reference>
<feature type="chain" id="PRO_0000182244" description="Arginine deiminase">
    <location>
        <begin position="1"/>
        <end position="410"/>
    </location>
</feature>
<feature type="active site" description="Amidino-cysteine intermediate" evidence="1">
    <location>
        <position position="400"/>
    </location>
</feature>
<dbReference type="EC" id="3.5.3.6" evidence="1"/>
<dbReference type="EMBL" id="AE009948">
    <property type="protein sequence ID" value="AAN01021.1"/>
    <property type="molecule type" value="Genomic_DNA"/>
</dbReference>
<dbReference type="RefSeq" id="NP_689148.1">
    <property type="nucleotide sequence ID" value="NC_004116.1"/>
</dbReference>
<dbReference type="RefSeq" id="WP_000194841.1">
    <property type="nucleotide sequence ID" value="NC_004116.1"/>
</dbReference>
<dbReference type="SMR" id="Q8DWQ2"/>
<dbReference type="STRING" id="208435.SAG2163"/>
<dbReference type="KEGG" id="sag:SAG2163"/>
<dbReference type="PATRIC" id="fig|208435.3.peg.2166"/>
<dbReference type="HOGENOM" id="CLU_052662_0_1_9"/>
<dbReference type="OrthoDB" id="9807502at2"/>
<dbReference type="UniPathway" id="UPA00254">
    <property type="reaction ID" value="UER00364"/>
</dbReference>
<dbReference type="Proteomes" id="UP000000821">
    <property type="component" value="Chromosome"/>
</dbReference>
<dbReference type="GO" id="GO:0005737">
    <property type="term" value="C:cytoplasm"/>
    <property type="evidence" value="ECO:0007669"/>
    <property type="project" value="UniProtKB-SubCell"/>
</dbReference>
<dbReference type="GO" id="GO:0016990">
    <property type="term" value="F:arginine deiminase activity"/>
    <property type="evidence" value="ECO:0007669"/>
    <property type="project" value="UniProtKB-UniRule"/>
</dbReference>
<dbReference type="GO" id="GO:0019547">
    <property type="term" value="P:arginine catabolic process to ornithine"/>
    <property type="evidence" value="ECO:0007669"/>
    <property type="project" value="UniProtKB-UniRule"/>
</dbReference>
<dbReference type="GO" id="GO:0019546">
    <property type="term" value="P:arginine deiminase pathway"/>
    <property type="evidence" value="ECO:0007669"/>
    <property type="project" value="TreeGrafter"/>
</dbReference>
<dbReference type="Gene3D" id="1.10.3930.10">
    <property type="entry name" value="Arginine deiminase"/>
    <property type="match status" value="1"/>
</dbReference>
<dbReference type="Gene3D" id="3.75.10.10">
    <property type="entry name" value="L-arginine/glycine Amidinotransferase, Chain A"/>
    <property type="match status" value="1"/>
</dbReference>
<dbReference type="HAMAP" id="MF_00242">
    <property type="entry name" value="Arg_deiminase"/>
    <property type="match status" value="1"/>
</dbReference>
<dbReference type="InterPro" id="IPR003876">
    <property type="entry name" value="Arg_deiminase"/>
</dbReference>
<dbReference type="NCBIfam" id="TIGR01078">
    <property type="entry name" value="arcA"/>
    <property type="match status" value="1"/>
</dbReference>
<dbReference type="NCBIfam" id="NF002381">
    <property type="entry name" value="PRK01388.1"/>
    <property type="match status" value="1"/>
</dbReference>
<dbReference type="PANTHER" id="PTHR47271">
    <property type="entry name" value="ARGININE DEIMINASE"/>
    <property type="match status" value="1"/>
</dbReference>
<dbReference type="PANTHER" id="PTHR47271:SF2">
    <property type="entry name" value="ARGININE DEIMINASE"/>
    <property type="match status" value="1"/>
</dbReference>
<dbReference type="Pfam" id="PF02274">
    <property type="entry name" value="ADI"/>
    <property type="match status" value="1"/>
</dbReference>
<dbReference type="PIRSF" id="PIRSF006356">
    <property type="entry name" value="Arg_deiminase"/>
    <property type="match status" value="1"/>
</dbReference>
<dbReference type="PRINTS" id="PR01466">
    <property type="entry name" value="ARGDEIMINASE"/>
</dbReference>
<dbReference type="SUPFAM" id="SSF55909">
    <property type="entry name" value="Pentein"/>
    <property type="match status" value="1"/>
</dbReference>
<keyword id="KW-0056">Arginine metabolism</keyword>
<keyword id="KW-0963">Cytoplasm</keyword>
<keyword id="KW-0378">Hydrolase</keyword>
<keyword id="KW-1185">Reference proteome</keyword>
<protein>
    <recommendedName>
        <fullName evidence="1">Arginine deiminase</fullName>
        <shortName evidence="1">ADI</shortName>
        <ecNumber evidence="1">3.5.3.6</ecNumber>
    </recommendedName>
    <alternativeName>
        <fullName evidence="1">Arginine dihydrolase</fullName>
        <shortName evidence="1">AD</shortName>
    </alternativeName>
</protein>
<sequence>MTQTHPIHVFSEIGKLKKVMLHRPGKEIENLMPDYLERLLFDDIPFLEDAQKEHDAFAQALRNEGVEVLYLENLAAESLTNQEIREQFIDEYIGEANVRGRATKKAIRELLLNIKDNKELIEKTMAGIQKSELPEIPSSEKGLTDLVESNYPFAIDPMPNLYFTRDPFATIGNGVSLNHMFSETRNRETLYGKYIFTHHPEYGGKVPMVYEREETTRIEGGDELVLSKDVLAVGISQRTDAASIEKLLVNIFKQNLGFKKVLAFEFANNRKFMHLDTVFTMVDYDKFTIHPEIEGDLRVYSVTYENQDLHIEEEKGDLADLLAKNLGVEKVELIRCGGDNLVAAGREQWNDGSNTLTIAPGVVIVYNRNTITNAILESKGLKLIKINGSELVRGRGGPRCMSMPFEREDL</sequence>
<evidence type="ECO:0000255" key="1">
    <source>
        <dbReference type="HAMAP-Rule" id="MF_00242"/>
    </source>
</evidence>
<organism>
    <name type="scientific">Streptococcus agalactiae serotype V (strain ATCC BAA-611 / 2603 V/R)</name>
    <dbReference type="NCBI Taxonomy" id="208435"/>
    <lineage>
        <taxon>Bacteria</taxon>
        <taxon>Bacillati</taxon>
        <taxon>Bacillota</taxon>
        <taxon>Bacilli</taxon>
        <taxon>Lactobacillales</taxon>
        <taxon>Streptococcaceae</taxon>
        <taxon>Streptococcus</taxon>
    </lineage>
</organism>